<sequence>MGLPWYRVHTVVLNDPGRLLSVHIMHTALVAGWAGSMALYELAVFDPSDPVLDPMWRQGMFVIPFMTRLGITNSWGGWSITGGTITNPGLWSYEGVAGAHIVFSGLCFLAAIWHWVYWDLEIFCDERTGKPSLDLPKIFGIHLFLSGVACFGFGAFHVTGLYGPGIWVSDPYGLTGKVQPVNPAWGVEGFDPFVPGGIASHHIAAGTLGILAGLFHLSVRPPQRLYKGLRMGNIETVLSSSIAAVFFAAFVVAGTMWYGSATTPIELFGPTRYQWDQGYFQQEIYRRVSAGLAENQSLSEAWSKIPEKLAFYDYIGNNPAKGGLFRAGSMDNGDGIAVGWLGHPIFRDKEGRELFVRRMPTFFETFPVVLVDGDGIVRADVPFRRAESKYSVEQVGVTVEFYGGELNGVSYSDPATVKKYARRAQLGEIFELDRATLKSDGVFRSSPRGWFTFGHASFALLFFFGHIWHGARTLFRDVFAGIDPDLDAQVEFGAFQKLGDPTTRRQVV</sequence>
<reference key="1">
    <citation type="journal article" date="2008" name="Nature">
        <title>The draft genome of the transgenic tropical fruit tree papaya (Carica papaya Linnaeus).</title>
        <authorList>
            <person name="Ming R."/>
            <person name="Hou S."/>
            <person name="Feng Y."/>
            <person name="Yu Q."/>
            <person name="Dionne-Laporte A."/>
            <person name="Saw J.H."/>
            <person name="Senin P."/>
            <person name="Wang W."/>
            <person name="Ly B.V."/>
            <person name="Lewis K.L."/>
            <person name="Salzberg S.L."/>
            <person name="Feng L."/>
            <person name="Jones M.R."/>
            <person name="Skelton R.L."/>
            <person name="Murray J.E."/>
            <person name="Chen C."/>
            <person name="Qian W."/>
            <person name="Shen J."/>
            <person name="Du P."/>
            <person name="Eustice M."/>
            <person name="Tong E."/>
            <person name="Tang H."/>
            <person name="Lyons E."/>
            <person name="Paull R.E."/>
            <person name="Michael T.P."/>
            <person name="Wall K."/>
            <person name="Rice D.W."/>
            <person name="Albert H."/>
            <person name="Wang M.L."/>
            <person name="Zhu Y.J."/>
            <person name="Schatz M."/>
            <person name="Nagarajan N."/>
            <person name="Acob R.A."/>
            <person name="Guan P."/>
            <person name="Blas A."/>
            <person name="Wai C.M."/>
            <person name="Ackerman C.M."/>
            <person name="Ren Y."/>
            <person name="Liu C."/>
            <person name="Wang J."/>
            <person name="Wang J."/>
            <person name="Na J.K."/>
            <person name="Shakirov E.V."/>
            <person name="Haas B."/>
            <person name="Thimmapuram J."/>
            <person name="Nelson D."/>
            <person name="Wang X."/>
            <person name="Bowers J.E."/>
            <person name="Gschwend A.R."/>
            <person name="Delcher A.L."/>
            <person name="Singh R."/>
            <person name="Suzuki J.Y."/>
            <person name="Tripathi S."/>
            <person name="Neupane K."/>
            <person name="Wei H."/>
            <person name="Irikura B."/>
            <person name="Paidi M."/>
            <person name="Jiang N."/>
            <person name="Zhang W."/>
            <person name="Presting G."/>
            <person name="Windsor A."/>
            <person name="Navajas-Perez R."/>
            <person name="Torres M.J."/>
            <person name="Feltus F.A."/>
            <person name="Porter B."/>
            <person name="Li Y."/>
            <person name="Burroughs A.M."/>
            <person name="Luo M.C."/>
            <person name="Liu L."/>
            <person name="Christopher D.A."/>
            <person name="Mount S.M."/>
            <person name="Moore P.H."/>
            <person name="Sugimura T."/>
            <person name="Jiang J."/>
            <person name="Schuler M.A."/>
            <person name="Friedman V."/>
            <person name="Mitchell-Olds T."/>
            <person name="Shippen D.E."/>
            <person name="dePamphilis C.W."/>
            <person name="Palmer J.D."/>
            <person name="Freeling M."/>
            <person name="Paterson A.H."/>
            <person name="Gonsalves D."/>
            <person name="Wang L."/>
            <person name="Alam M."/>
        </authorList>
    </citation>
    <scope>NUCLEOTIDE SEQUENCE [LARGE SCALE GENOMIC DNA]</scope>
    <source>
        <strain>cv. SunUp</strain>
    </source>
</reference>
<organism>
    <name type="scientific">Carica papaya</name>
    <name type="common">Papaya</name>
    <dbReference type="NCBI Taxonomy" id="3649"/>
    <lineage>
        <taxon>Eukaryota</taxon>
        <taxon>Viridiplantae</taxon>
        <taxon>Streptophyta</taxon>
        <taxon>Embryophyta</taxon>
        <taxon>Tracheophyta</taxon>
        <taxon>Spermatophyta</taxon>
        <taxon>Magnoliopsida</taxon>
        <taxon>eudicotyledons</taxon>
        <taxon>Gunneridae</taxon>
        <taxon>Pentapetalae</taxon>
        <taxon>rosids</taxon>
        <taxon>malvids</taxon>
        <taxon>Brassicales</taxon>
        <taxon>Caricaceae</taxon>
        <taxon>Carica</taxon>
    </lineage>
</organism>
<evidence type="ECO:0000255" key="1">
    <source>
        <dbReference type="HAMAP-Rule" id="MF_01495"/>
    </source>
</evidence>
<feature type="chain" id="PRO_0000359803" description="Photosystem II CP47 reaction center protein">
    <location>
        <begin position="1"/>
        <end position="508"/>
    </location>
</feature>
<feature type="transmembrane region" description="Helical" evidence="1">
    <location>
        <begin position="21"/>
        <end position="36"/>
    </location>
</feature>
<feature type="transmembrane region" description="Helical" evidence="1">
    <location>
        <begin position="101"/>
        <end position="115"/>
    </location>
</feature>
<feature type="transmembrane region" description="Helical" evidence="1">
    <location>
        <begin position="140"/>
        <end position="156"/>
    </location>
</feature>
<feature type="transmembrane region" description="Helical" evidence="1">
    <location>
        <begin position="203"/>
        <end position="218"/>
    </location>
</feature>
<feature type="transmembrane region" description="Helical" evidence="1">
    <location>
        <begin position="237"/>
        <end position="252"/>
    </location>
</feature>
<feature type="transmembrane region" description="Helical" evidence="1">
    <location>
        <begin position="457"/>
        <end position="472"/>
    </location>
</feature>
<geneLocation type="chloroplast"/>
<proteinExistence type="inferred from homology"/>
<name>PSBB_CARPA</name>
<comment type="function">
    <text evidence="1">One of the components of the core complex of photosystem II (PSII). It binds chlorophyll and helps catalyze the primary light-induced photochemical processes of PSII. PSII is a light-driven water:plastoquinone oxidoreductase, using light energy to abstract electrons from H(2)O, generating O(2) and a proton gradient subsequently used for ATP formation.</text>
</comment>
<comment type="cofactor">
    <text evidence="1">Binds multiple chlorophylls. PSII binds additional chlorophylls, carotenoids and specific lipids.</text>
</comment>
<comment type="subunit">
    <text evidence="1">PSII is composed of 1 copy each of membrane proteins PsbA, PsbB, PsbC, PsbD, PsbE, PsbF, PsbH, PsbI, PsbJ, PsbK, PsbL, PsbM, PsbT, PsbX, PsbY, PsbZ, Psb30/Ycf12, at least 3 peripheral proteins of the oxygen-evolving complex and a large number of cofactors. It forms dimeric complexes.</text>
</comment>
<comment type="subcellular location">
    <subcellularLocation>
        <location evidence="1">Plastid</location>
        <location evidence="1">Chloroplast thylakoid membrane</location>
        <topology evidence="1">Multi-pass membrane protein</topology>
    </subcellularLocation>
</comment>
<comment type="similarity">
    <text evidence="1">Belongs to the PsbB/PsbC family. PsbB subfamily.</text>
</comment>
<protein>
    <recommendedName>
        <fullName evidence="1">Photosystem II CP47 reaction center protein</fullName>
    </recommendedName>
    <alternativeName>
        <fullName evidence="1">PSII 47 kDa protein</fullName>
    </alternativeName>
    <alternativeName>
        <fullName evidence="1">Protein CP-47</fullName>
    </alternativeName>
</protein>
<keyword id="KW-0148">Chlorophyll</keyword>
<keyword id="KW-0150">Chloroplast</keyword>
<keyword id="KW-0157">Chromophore</keyword>
<keyword id="KW-0472">Membrane</keyword>
<keyword id="KW-0602">Photosynthesis</keyword>
<keyword id="KW-0604">Photosystem II</keyword>
<keyword id="KW-0934">Plastid</keyword>
<keyword id="KW-0793">Thylakoid</keyword>
<keyword id="KW-0812">Transmembrane</keyword>
<keyword id="KW-1133">Transmembrane helix</keyword>
<accession>B1A961</accession>
<gene>
    <name evidence="1" type="primary">psbB</name>
</gene>
<dbReference type="EMBL" id="EU431223">
    <property type="protein sequence ID" value="ABY86809.1"/>
    <property type="molecule type" value="Genomic_DNA"/>
</dbReference>
<dbReference type="RefSeq" id="YP_001671709.1">
    <property type="nucleotide sequence ID" value="NC_010323.1"/>
</dbReference>
<dbReference type="SMR" id="B1A961"/>
<dbReference type="GeneID" id="5878371"/>
<dbReference type="KEGG" id="cpap:5878371"/>
<dbReference type="OrthoDB" id="1034980at2759"/>
<dbReference type="GO" id="GO:0009535">
    <property type="term" value="C:chloroplast thylakoid membrane"/>
    <property type="evidence" value="ECO:0007669"/>
    <property type="project" value="UniProtKB-SubCell"/>
</dbReference>
<dbReference type="GO" id="GO:0009523">
    <property type="term" value="C:photosystem II"/>
    <property type="evidence" value="ECO:0007669"/>
    <property type="project" value="UniProtKB-KW"/>
</dbReference>
<dbReference type="GO" id="GO:0016168">
    <property type="term" value="F:chlorophyll binding"/>
    <property type="evidence" value="ECO:0007669"/>
    <property type="project" value="UniProtKB-UniRule"/>
</dbReference>
<dbReference type="GO" id="GO:0045156">
    <property type="term" value="F:electron transporter, transferring electrons within the cyclic electron transport pathway of photosynthesis activity"/>
    <property type="evidence" value="ECO:0007669"/>
    <property type="project" value="InterPro"/>
</dbReference>
<dbReference type="GO" id="GO:0009772">
    <property type="term" value="P:photosynthetic electron transport in photosystem II"/>
    <property type="evidence" value="ECO:0007669"/>
    <property type="project" value="InterPro"/>
</dbReference>
<dbReference type="FunFam" id="3.10.680.10:FF:000001">
    <property type="entry name" value="Photosystem II CP47 reaction center protein"/>
    <property type="match status" value="1"/>
</dbReference>
<dbReference type="Gene3D" id="3.10.680.10">
    <property type="entry name" value="Photosystem II CP47 reaction center protein"/>
    <property type="match status" value="1"/>
</dbReference>
<dbReference type="HAMAP" id="MF_01495">
    <property type="entry name" value="PSII_PsbB_CP47"/>
    <property type="match status" value="1"/>
</dbReference>
<dbReference type="InterPro" id="IPR000932">
    <property type="entry name" value="PS_antenna-like"/>
</dbReference>
<dbReference type="InterPro" id="IPR036001">
    <property type="entry name" value="PS_II_antenna-like_sf"/>
</dbReference>
<dbReference type="InterPro" id="IPR017486">
    <property type="entry name" value="PSII_PsbB"/>
</dbReference>
<dbReference type="NCBIfam" id="TIGR03039">
    <property type="entry name" value="PS_II_CP47"/>
    <property type="match status" value="1"/>
</dbReference>
<dbReference type="PANTHER" id="PTHR33180">
    <property type="entry name" value="PHOTOSYSTEM II CP43 REACTION CENTER PROTEIN"/>
    <property type="match status" value="1"/>
</dbReference>
<dbReference type="PANTHER" id="PTHR33180:SF35">
    <property type="entry name" value="PHOTOSYSTEM II CP47 REACTION CENTER PROTEIN"/>
    <property type="match status" value="1"/>
</dbReference>
<dbReference type="Pfam" id="PF00421">
    <property type="entry name" value="PSII"/>
    <property type="match status" value="1"/>
</dbReference>
<dbReference type="SUPFAM" id="SSF161077">
    <property type="entry name" value="Photosystem II antenna protein-like"/>
    <property type="match status" value="1"/>
</dbReference>